<name>SECF_RHOCB</name>
<organism>
    <name type="scientific">Rhodobacter capsulatus (strain ATCC BAA-309 / NBRC 16581 / SB1003)</name>
    <dbReference type="NCBI Taxonomy" id="272942"/>
    <lineage>
        <taxon>Bacteria</taxon>
        <taxon>Pseudomonadati</taxon>
        <taxon>Pseudomonadota</taxon>
        <taxon>Alphaproteobacteria</taxon>
        <taxon>Rhodobacterales</taxon>
        <taxon>Rhodobacter group</taxon>
        <taxon>Rhodobacter</taxon>
    </lineage>
</organism>
<accession>O33518</accession>
<accession>D5AU89</accession>
<feature type="chain" id="PRO_0000095984" description="Protein translocase subunit SecF">
    <location>
        <begin position="1"/>
        <end position="333"/>
    </location>
</feature>
<feature type="transmembrane region" description="Helical" evidence="1">
    <location>
        <begin position="27"/>
        <end position="47"/>
    </location>
</feature>
<feature type="transmembrane region" description="Helical" evidence="1">
    <location>
        <begin position="152"/>
        <end position="172"/>
    </location>
</feature>
<feature type="transmembrane region" description="Helical" evidence="1">
    <location>
        <begin position="180"/>
        <end position="200"/>
    </location>
</feature>
<feature type="transmembrane region" description="Helical" evidence="1">
    <location>
        <begin position="207"/>
        <end position="227"/>
    </location>
</feature>
<feature type="transmembrane region" description="Helical" evidence="1">
    <location>
        <begin position="253"/>
        <end position="275"/>
    </location>
</feature>
<feature type="transmembrane region" description="Helical" evidence="1">
    <location>
        <begin position="285"/>
        <end position="307"/>
    </location>
</feature>
<sequence>MAFRLKLVPEKTNFDFFRWQWATFGAAIVMMIASVILPLVIGLNFGIDFKGGTTIRTESTTAIDVGVYRAALEPLELGDVIISEVRDPSFREDQHVAMIRIQMQEDGQGAEGQGAQGQELVNKVETALTAVDPALKITSFESVGPKVSGELVWTAVWSLLAATVVIMFYIWVRFEWQFALGAVVALVHDVLLTVGLFAVLQLKFDLTTVAALLTITGYSINDTVVVFDRLRENLIKYKTMPLRDVMNLSVNETLSRTVMTGMTTLLALVPMLIWGGDVIRGFVFAMVWGVFTGTYSSVYVAKNIVLFIGLDRNKEKKDPSDKFFSNGAQDGAP</sequence>
<reference key="1">
    <citation type="journal article" date="1997" name="J. Mol. Biol.">
        <title>Molecular and immunological analysis of an ABC transporter complex required for cytochrome c biogenesis.</title>
        <authorList>
            <person name="Goldman B.S."/>
            <person name="Beckman D.L."/>
            <person name="Bali A."/>
            <person name="Monika E.M."/>
            <person name="Gabbert K.K."/>
            <person name="Kranz R.G."/>
        </authorList>
    </citation>
    <scope>NUCLEOTIDE SEQUENCE [GENOMIC DNA]</scope>
    <source>
        <strain>ATCC BAA-309 / NBRC 16581 / SB1003</strain>
    </source>
</reference>
<reference key="2">
    <citation type="journal article" date="2010" name="J. Bacteriol.">
        <title>Complete genome sequence of the photosynthetic purple nonsulfur bacterium Rhodobacter capsulatus SB 1003.</title>
        <authorList>
            <person name="Strnad H."/>
            <person name="Lapidus A."/>
            <person name="Paces J."/>
            <person name="Ulbrich P."/>
            <person name="Vlcek C."/>
            <person name="Paces V."/>
            <person name="Haselkorn R."/>
        </authorList>
    </citation>
    <scope>NUCLEOTIDE SEQUENCE [LARGE SCALE GENOMIC DNA]</scope>
    <source>
        <strain>ATCC BAA-309 / NBRC 16581 / SB1003</strain>
    </source>
</reference>
<protein>
    <recommendedName>
        <fullName>Protein translocase subunit SecF</fullName>
    </recommendedName>
</protein>
<gene>
    <name evidence="1" type="primary">secF</name>
    <name type="ordered locus">RCAP_rcc01783</name>
</gene>
<comment type="function">
    <text evidence="1">Part of the Sec protein translocase complex. Interacts with the SecYEG preprotein conducting channel. SecDF uses the proton motive force (PMF) to complete protein translocation after the ATP-dependent function of SecA.</text>
</comment>
<comment type="subunit">
    <text evidence="1">Forms a complex with SecD. Part of the essential Sec protein translocation apparatus which comprises SecA, SecYEG and auxiliary proteins SecDF-YajC and YidC.</text>
</comment>
<comment type="subcellular location">
    <subcellularLocation>
        <location evidence="1">Cell inner membrane</location>
        <topology evidence="1">Multi-pass membrane protein</topology>
    </subcellularLocation>
</comment>
<comment type="similarity">
    <text evidence="1">Belongs to the SecD/SecF family. SecF subfamily.</text>
</comment>
<evidence type="ECO:0000255" key="1">
    <source>
        <dbReference type="HAMAP-Rule" id="MF_01464"/>
    </source>
</evidence>
<proteinExistence type="inferred from homology"/>
<dbReference type="EMBL" id="U69979">
    <property type="protein sequence ID" value="AAB62802.1"/>
    <property type="molecule type" value="Genomic_DNA"/>
</dbReference>
<dbReference type="EMBL" id="CP001312">
    <property type="protein sequence ID" value="ADE85528.1"/>
    <property type="molecule type" value="Genomic_DNA"/>
</dbReference>
<dbReference type="RefSeq" id="WP_013067507.1">
    <property type="nucleotide sequence ID" value="NC_014034.1"/>
</dbReference>
<dbReference type="SMR" id="O33518"/>
<dbReference type="STRING" id="272942.RCAP_rcc01783"/>
<dbReference type="GeneID" id="31490658"/>
<dbReference type="KEGG" id="rcp:RCAP_rcc01783"/>
<dbReference type="eggNOG" id="COG0341">
    <property type="taxonomic scope" value="Bacteria"/>
</dbReference>
<dbReference type="HOGENOM" id="CLU_050012_1_1_5"/>
<dbReference type="OrthoDB" id="9774769at2"/>
<dbReference type="Proteomes" id="UP000002361">
    <property type="component" value="Chromosome"/>
</dbReference>
<dbReference type="GO" id="GO:0005886">
    <property type="term" value="C:plasma membrane"/>
    <property type="evidence" value="ECO:0007669"/>
    <property type="project" value="UniProtKB-SubCell"/>
</dbReference>
<dbReference type="GO" id="GO:0015450">
    <property type="term" value="F:protein-transporting ATPase activity"/>
    <property type="evidence" value="ECO:0007669"/>
    <property type="project" value="InterPro"/>
</dbReference>
<dbReference type="GO" id="GO:0065002">
    <property type="term" value="P:intracellular protein transmembrane transport"/>
    <property type="evidence" value="ECO:0007669"/>
    <property type="project" value="UniProtKB-UniRule"/>
</dbReference>
<dbReference type="GO" id="GO:0006605">
    <property type="term" value="P:protein targeting"/>
    <property type="evidence" value="ECO:0007669"/>
    <property type="project" value="UniProtKB-UniRule"/>
</dbReference>
<dbReference type="GO" id="GO:0043952">
    <property type="term" value="P:protein transport by the Sec complex"/>
    <property type="evidence" value="ECO:0007669"/>
    <property type="project" value="UniProtKB-UniRule"/>
</dbReference>
<dbReference type="FunFam" id="1.20.1640.10:FF:000024">
    <property type="entry name" value="Multifunctional fusion protein"/>
    <property type="match status" value="1"/>
</dbReference>
<dbReference type="Gene3D" id="1.20.1640.10">
    <property type="entry name" value="Multidrug efflux transporter AcrB transmembrane domain"/>
    <property type="match status" value="1"/>
</dbReference>
<dbReference type="HAMAP" id="MF_01464_B">
    <property type="entry name" value="SecF_B"/>
    <property type="match status" value="1"/>
</dbReference>
<dbReference type="InterPro" id="IPR022813">
    <property type="entry name" value="SecD/SecF_arch_bac"/>
</dbReference>
<dbReference type="InterPro" id="IPR022645">
    <property type="entry name" value="SecD/SecF_bac"/>
</dbReference>
<dbReference type="InterPro" id="IPR022646">
    <property type="entry name" value="SecD/SecF_CS"/>
</dbReference>
<dbReference type="InterPro" id="IPR048634">
    <property type="entry name" value="SecD_SecF_C"/>
</dbReference>
<dbReference type="InterPro" id="IPR055344">
    <property type="entry name" value="SecD_SecF_C_bact"/>
</dbReference>
<dbReference type="InterPro" id="IPR005665">
    <property type="entry name" value="SecF_bac"/>
</dbReference>
<dbReference type="NCBIfam" id="TIGR00916">
    <property type="entry name" value="2A0604s01"/>
    <property type="match status" value="1"/>
</dbReference>
<dbReference type="NCBIfam" id="TIGR00966">
    <property type="entry name" value="transloc_SecF"/>
    <property type="match status" value="1"/>
</dbReference>
<dbReference type="PANTHER" id="PTHR30081:SF8">
    <property type="entry name" value="PROTEIN TRANSLOCASE SUBUNIT SECF"/>
    <property type="match status" value="1"/>
</dbReference>
<dbReference type="PANTHER" id="PTHR30081">
    <property type="entry name" value="PROTEIN-EXPORT MEMBRANE PROTEIN SEC"/>
    <property type="match status" value="1"/>
</dbReference>
<dbReference type="Pfam" id="PF07549">
    <property type="entry name" value="Sec_GG"/>
    <property type="match status" value="1"/>
</dbReference>
<dbReference type="Pfam" id="PF02355">
    <property type="entry name" value="SecD_SecF_C"/>
    <property type="match status" value="1"/>
</dbReference>
<dbReference type="PRINTS" id="PR01755">
    <property type="entry name" value="SECFTRNLCASE"/>
</dbReference>
<dbReference type="SUPFAM" id="SSF82866">
    <property type="entry name" value="Multidrug efflux transporter AcrB transmembrane domain"/>
    <property type="match status" value="1"/>
</dbReference>
<keyword id="KW-0997">Cell inner membrane</keyword>
<keyword id="KW-1003">Cell membrane</keyword>
<keyword id="KW-0472">Membrane</keyword>
<keyword id="KW-0653">Protein transport</keyword>
<keyword id="KW-1185">Reference proteome</keyword>
<keyword id="KW-0811">Translocation</keyword>
<keyword id="KW-0812">Transmembrane</keyword>
<keyword id="KW-1133">Transmembrane helix</keyword>
<keyword id="KW-0813">Transport</keyword>